<dbReference type="EC" id="3.6.5.2" evidence="4"/>
<dbReference type="EMBL" id="CR859359">
    <property type="protein sequence ID" value="CAH91533.1"/>
    <property type="molecule type" value="mRNA"/>
</dbReference>
<dbReference type="RefSeq" id="NP_001127429.1">
    <property type="nucleotide sequence ID" value="NM_001133957.1"/>
</dbReference>
<dbReference type="SMR" id="Q5R9M7"/>
<dbReference type="FunCoup" id="Q5R9M7">
    <property type="interactions" value="3171"/>
</dbReference>
<dbReference type="STRING" id="9601.ENSPPYP00000007454"/>
<dbReference type="Ensembl" id="ENSPPYT00000007758.2">
    <property type="protein sequence ID" value="ENSPPYP00000007454.1"/>
    <property type="gene ID" value="ENSPPYG00000006573.2"/>
</dbReference>
<dbReference type="GeneID" id="100174499"/>
<dbReference type="KEGG" id="pon:100174499"/>
<dbReference type="CTD" id="8766"/>
<dbReference type="eggNOG" id="KOG0087">
    <property type="taxonomic scope" value="Eukaryota"/>
</dbReference>
<dbReference type="GeneTree" id="ENSGT00940000154914"/>
<dbReference type="HOGENOM" id="CLU_041217_23_0_1"/>
<dbReference type="InParanoid" id="Q5R9M7"/>
<dbReference type="OMA" id="ITAIYQM"/>
<dbReference type="OrthoDB" id="9989112at2759"/>
<dbReference type="TreeFam" id="TF300099"/>
<dbReference type="Proteomes" id="UP000001595">
    <property type="component" value="Chromosome 15"/>
</dbReference>
<dbReference type="GO" id="GO:0005814">
    <property type="term" value="C:centriole"/>
    <property type="evidence" value="ECO:0007669"/>
    <property type="project" value="Ensembl"/>
</dbReference>
<dbReference type="GO" id="GO:0005813">
    <property type="term" value="C:centrosome"/>
    <property type="evidence" value="ECO:0000250"/>
    <property type="project" value="UniProtKB"/>
</dbReference>
<dbReference type="GO" id="GO:0032154">
    <property type="term" value="C:cleavage furrow"/>
    <property type="evidence" value="ECO:0000250"/>
    <property type="project" value="UniProtKB"/>
</dbReference>
<dbReference type="GO" id="GO:0030666">
    <property type="term" value="C:endocytic vesicle membrane"/>
    <property type="evidence" value="ECO:0000250"/>
    <property type="project" value="UniProtKB"/>
</dbReference>
<dbReference type="GO" id="GO:0070062">
    <property type="term" value="C:extracellular exosome"/>
    <property type="evidence" value="ECO:0007669"/>
    <property type="project" value="Ensembl"/>
</dbReference>
<dbReference type="GO" id="GO:0098978">
    <property type="term" value="C:glutamatergic synapse"/>
    <property type="evidence" value="ECO:0007669"/>
    <property type="project" value="Ensembl"/>
</dbReference>
<dbReference type="GO" id="GO:0000139">
    <property type="term" value="C:Golgi membrane"/>
    <property type="evidence" value="ECO:0000250"/>
    <property type="project" value="UniProtKB"/>
</dbReference>
<dbReference type="GO" id="GO:0005828">
    <property type="term" value="C:kinetochore microtubule"/>
    <property type="evidence" value="ECO:0007669"/>
    <property type="project" value="Ensembl"/>
</dbReference>
<dbReference type="GO" id="GO:0005771">
    <property type="term" value="C:multivesicular body"/>
    <property type="evidence" value="ECO:0007669"/>
    <property type="project" value="Ensembl"/>
</dbReference>
<dbReference type="GO" id="GO:0045335">
    <property type="term" value="C:phagocytic vesicle"/>
    <property type="evidence" value="ECO:0000250"/>
    <property type="project" value="UniProtKB"/>
</dbReference>
<dbReference type="GO" id="GO:0098837">
    <property type="term" value="C:postsynaptic recycling endosome"/>
    <property type="evidence" value="ECO:0007669"/>
    <property type="project" value="Ensembl"/>
</dbReference>
<dbReference type="GO" id="GO:0032991">
    <property type="term" value="C:protein-containing complex"/>
    <property type="evidence" value="ECO:0007669"/>
    <property type="project" value="Ensembl"/>
</dbReference>
<dbReference type="GO" id="GO:0055037">
    <property type="term" value="C:recycling endosome"/>
    <property type="evidence" value="ECO:0000250"/>
    <property type="project" value="UniProtKB"/>
</dbReference>
<dbReference type="GO" id="GO:0055038">
    <property type="term" value="C:recycling endosome membrane"/>
    <property type="evidence" value="ECO:0007669"/>
    <property type="project" value="UniProtKB-SubCell"/>
</dbReference>
<dbReference type="GO" id="GO:0000922">
    <property type="term" value="C:spindle pole"/>
    <property type="evidence" value="ECO:0007669"/>
    <property type="project" value="Ensembl"/>
</dbReference>
<dbReference type="GO" id="GO:0032588">
    <property type="term" value="C:trans-Golgi network membrane"/>
    <property type="evidence" value="ECO:0000250"/>
    <property type="project" value="UniProtKB"/>
</dbReference>
<dbReference type="GO" id="GO:0051959">
    <property type="term" value="F:dynein light intermediate chain binding"/>
    <property type="evidence" value="ECO:0000250"/>
    <property type="project" value="UniProtKB"/>
</dbReference>
<dbReference type="GO" id="GO:0003925">
    <property type="term" value="F:G protein activity"/>
    <property type="evidence" value="ECO:0007669"/>
    <property type="project" value="UniProtKB-EC"/>
</dbReference>
<dbReference type="GO" id="GO:0005525">
    <property type="term" value="F:GTP binding"/>
    <property type="evidence" value="ECO:0007669"/>
    <property type="project" value="UniProtKB-KW"/>
</dbReference>
<dbReference type="GO" id="GO:0003924">
    <property type="term" value="F:GTPase activity"/>
    <property type="evidence" value="ECO:0000250"/>
    <property type="project" value="UniProtKB"/>
</dbReference>
<dbReference type="GO" id="GO:0008017">
    <property type="term" value="F:microtubule binding"/>
    <property type="evidence" value="ECO:0007669"/>
    <property type="project" value="Ensembl"/>
</dbReference>
<dbReference type="GO" id="GO:0031489">
    <property type="term" value="F:myosin V binding"/>
    <property type="evidence" value="ECO:0007669"/>
    <property type="project" value="Ensembl"/>
</dbReference>
<dbReference type="GO" id="GO:0150093">
    <property type="term" value="P:amyloid-beta clearance by transcytosis"/>
    <property type="evidence" value="ECO:0007669"/>
    <property type="project" value="Ensembl"/>
</dbReference>
<dbReference type="GO" id="GO:0030953">
    <property type="term" value="P:astral microtubule organization"/>
    <property type="evidence" value="ECO:0007669"/>
    <property type="project" value="Ensembl"/>
</dbReference>
<dbReference type="GO" id="GO:0061502">
    <property type="term" value="P:early endosome to recycling endosome transport"/>
    <property type="evidence" value="ECO:0007669"/>
    <property type="project" value="Ensembl"/>
</dbReference>
<dbReference type="GO" id="GO:0090150">
    <property type="term" value="P:establishment of protein localization to membrane"/>
    <property type="evidence" value="ECO:0007669"/>
    <property type="project" value="Ensembl"/>
</dbReference>
<dbReference type="GO" id="GO:0072594">
    <property type="term" value="P:establishment of protein localization to organelle"/>
    <property type="evidence" value="ECO:0007669"/>
    <property type="project" value="Ensembl"/>
</dbReference>
<dbReference type="GO" id="GO:1990182">
    <property type="term" value="P:exosomal secretion"/>
    <property type="evidence" value="ECO:0007669"/>
    <property type="project" value="Ensembl"/>
</dbReference>
<dbReference type="GO" id="GO:0032402">
    <property type="term" value="P:melanosome transport"/>
    <property type="evidence" value="ECO:0000250"/>
    <property type="project" value="UniProtKB"/>
</dbReference>
<dbReference type="GO" id="GO:0007080">
    <property type="term" value="P:mitotic metaphase chromosome alignment"/>
    <property type="evidence" value="ECO:0007669"/>
    <property type="project" value="Ensembl"/>
</dbReference>
<dbReference type="GO" id="GO:0090307">
    <property type="term" value="P:mitotic spindle assembly"/>
    <property type="evidence" value="ECO:0007669"/>
    <property type="project" value="Ensembl"/>
</dbReference>
<dbReference type="GO" id="GO:0036258">
    <property type="term" value="P:multivesicular body assembly"/>
    <property type="evidence" value="ECO:0007669"/>
    <property type="project" value="Ensembl"/>
</dbReference>
<dbReference type="GO" id="GO:0031175">
    <property type="term" value="P:neuron projection development"/>
    <property type="evidence" value="ECO:0000250"/>
    <property type="project" value="UniProtKB"/>
</dbReference>
<dbReference type="GO" id="GO:0010634">
    <property type="term" value="P:positive regulation of epithelial cell migration"/>
    <property type="evidence" value="ECO:0007669"/>
    <property type="project" value="Ensembl"/>
</dbReference>
<dbReference type="GO" id="GO:0010971">
    <property type="term" value="P:positive regulation of G2/M transition of mitotic cell cycle"/>
    <property type="evidence" value="ECO:0007669"/>
    <property type="project" value="Ensembl"/>
</dbReference>
<dbReference type="GO" id="GO:1903438">
    <property type="term" value="P:positive regulation of mitotic cytokinetic process"/>
    <property type="evidence" value="ECO:0007669"/>
    <property type="project" value="Ensembl"/>
</dbReference>
<dbReference type="GO" id="GO:0034394">
    <property type="term" value="P:protein localization to cell surface"/>
    <property type="evidence" value="ECO:0007669"/>
    <property type="project" value="Ensembl"/>
</dbReference>
<dbReference type="GO" id="GO:0061512">
    <property type="term" value="P:protein localization to cilium"/>
    <property type="evidence" value="ECO:0000250"/>
    <property type="project" value="UniProtKB"/>
</dbReference>
<dbReference type="GO" id="GO:0072659">
    <property type="term" value="P:protein localization to plasma membrane"/>
    <property type="evidence" value="ECO:0000250"/>
    <property type="project" value="UniProtKB"/>
</dbReference>
<dbReference type="GO" id="GO:0071806">
    <property type="term" value="P:protein transmembrane transport"/>
    <property type="evidence" value="ECO:0007669"/>
    <property type="project" value="Ensembl"/>
</dbReference>
<dbReference type="GO" id="GO:1902017">
    <property type="term" value="P:regulation of cilium assembly"/>
    <property type="evidence" value="ECO:0000250"/>
    <property type="project" value="UniProtKB"/>
</dbReference>
<dbReference type="GO" id="GO:1902954">
    <property type="term" value="P:regulation of early endosome to recycling endosome transport"/>
    <property type="evidence" value="ECO:0000250"/>
    <property type="project" value="UniProtKB"/>
</dbReference>
<dbReference type="GO" id="GO:2001135">
    <property type="term" value="P:regulation of endocytic recycling"/>
    <property type="evidence" value="ECO:0000250"/>
    <property type="project" value="UniProtKB"/>
</dbReference>
<dbReference type="GO" id="GO:1904779">
    <property type="term" value="P:regulation of protein localization to centrosome"/>
    <property type="evidence" value="ECO:0000250"/>
    <property type="project" value="UniProtKB"/>
</dbReference>
<dbReference type="CDD" id="cd01868">
    <property type="entry name" value="Rab11_like"/>
    <property type="match status" value="1"/>
</dbReference>
<dbReference type="FunFam" id="3.40.50.300:FF:000085">
    <property type="entry name" value="Putative ras-related protein rab-11a"/>
    <property type="match status" value="1"/>
</dbReference>
<dbReference type="Gene3D" id="3.40.50.300">
    <property type="entry name" value="P-loop containing nucleotide triphosphate hydrolases"/>
    <property type="match status" value="1"/>
</dbReference>
<dbReference type="InterPro" id="IPR027417">
    <property type="entry name" value="P-loop_NTPase"/>
</dbReference>
<dbReference type="InterPro" id="IPR050209">
    <property type="entry name" value="Rab_GTPases_membrane_traffic"/>
</dbReference>
<dbReference type="InterPro" id="IPR005225">
    <property type="entry name" value="Small_GTP-bd"/>
</dbReference>
<dbReference type="InterPro" id="IPR001806">
    <property type="entry name" value="Small_GTPase"/>
</dbReference>
<dbReference type="NCBIfam" id="TIGR00231">
    <property type="entry name" value="small_GTP"/>
    <property type="match status" value="1"/>
</dbReference>
<dbReference type="PANTHER" id="PTHR47979">
    <property type="entry name" value="DRAB11-RELATED"/>
    <property type="match status" value="1"/>
</dbReference>
<dbReference type="Pfam" id="PF00071">
    <property type="entry name" value="Ras"/>
    <property type="match status" value="1"/>
</dbReference>
<dbReference type="PRINTS" id="PR00449">
    <property type="entry name" value="RASTRNSFRMNG"/>
</dbReference>
<dbReference type="SMART" id="SM00175">
    <property type="entry name" value="RAB"/>
    <property type="match status" value="1"/>
</dbReference>
<dbReference type="SMART" id="SM00176">
    <property type="entry name" value="RAN"/>
    <property type="match status" value="1"/>
</dbReference>
<dbReference type="SMART" id="SM00173">
    <property type="entry name" value="RAS"/>
    <property type="match status" value="1"/>
</dbReference>
<dbReference type="SMART" id="SM00174">
    <property type="entry name" value="RHO"/>
    <property type="match status" value="1"/>
</dbReference>
<dbReference type="SUPFAM" id="SSF52540">
    <property type="entry name" value="P-loop containing nucleoside triphosphate hydrolases"/>
    <property type="match status" value="1"/>
</dbReference>
<dbReference type="PROSITE" id="PS51419">
    <property type="entry name" value="RAB"/>
    <property type="match status" value="1"/>
</dbReference>
<reference key="1">
    <citation type="submission" date="2004-11" db="EMBL/GenBank/DDBJ databases">
        <authorList>
            <consortium name="The German cDNA consortium"/>
        </authorList>
    </citation>
    <scope>NUCLEOTIDE SEQUENCE [LARGE SCALE MRNA]</scope>
    <source>
        <tissue>Kidney</tissue>
    </source>
</reference>
<protein>
    <recommendedName>
        <fullName evidence="3">Ras-related protein Rab-11A</fullName>
        <shortName evidence="3">Rab-11</shortName>
        <ecNumber evidence="4">3.6.5.2</ecNumber>
    </recommendedName>
</protein>
<evidence type="ECO:0000250" key="1">
    <source>
        <dbReference type="UniProtKB" id="P62490"/>
    </source>
</evidence>
<evidence type="ECO:0000250" key="2">
    <source>
        <dbReference type="UniProtKB" id="P62491"/>
    </source>
</evidence>
<evidence type="ECO:0000250" key="3">
    <source>
        <dbReference type="UniProtKB" id="P62492"/>
    </source>
</evidence>
<evidence type="ECO:0000250" key="4">
    <source>
        <dbReference type="UniProtKB" id="P62493"/>
    </source>
</evidence>
<evidence type="ECO:0000250" key="5">
    <source>
        <dbReference type="UniProtKB" id="P62494"/>
    </source>
</evidence>
<evidence type="ECO:0000255" key="6"/>
<evidence type="ECO:0000256" key="7">
    <source>
        <dbReference type="SAM" id="MobiDB-lite"/>
    </source>
</evidence>
<evidence type="ECO:0000305" key="8"/>
<sequence length="216" mass="24394">MGTRDDEYDYLFKVVLIGDSGVGKSNLLSRFTRNEFNLESKSTIGVEFATRSIQVDGKTIKAQIWDTAGQERYRAITSAYYRGAVGALLVYDIAKHLTYENVERWLKELRDHADSNIVIMLVGNKSDLRHLRAVPTDEARAFAEKNGLSFIETSALDSTNVEAAFQTILTEIYRIVSQKQMSDRRENDMSPSNNVVPIHVPPTTENKPKVQCCQNI</sequence>
<comment type="function">
    <text evidence="1 2 3">The small GTPases Rab are key regulators of intracellular membrane trafficking, from the formation of transport vesicles to their fusion with membranes. Rabs cycle between an inactive GDP-bound form and an active GTP-bound form that is able to recruit to membranes different set of downstream effectors directly responsible for vesicle formation, movement, tethering and fusion. The small Rab GTPase RAB11A regulates endocytic recycling. Forms a functional Rab11/RAB11FIP3/dynein complex that regulates the movement of peripheral sorting endosomes (SE) along microtubule tracks toward the microtubule organizing center/centrosome, generating the endosomal recycling compartment (ERC). Acts as a major regulator of membrane delivery during cytokinesis. Together with MYO5B and RAB8A participates in epithelial cell polarization. Together with Rabin8/RAB3IP, RAB8A, the exocyst complex, PARD3, PRKCI, ANXA2, CDC42 and DNMBP promotes transcytosis of PODXL to the apical membrane initiation sites (AMIS), apical surface formation and lumenogenesis. Together with MYO5B participates in CFTR trafficking to the plasma membrane and TF (Transferrin) recycling in nonpolarized cells. Required in a complex with MYO5B and RAB11FIP2 for the transport of NPC1L1 to the plasma membrane. Participates in the sorting and basolateral transport of CDH1 from the Golgi apparatus to the plasma membrane (By similarity). Regulates the recycling of FCGRT (receptor of Fc region of monomeric IgG) to basolateral membranes (By similarity). May also play a role in melanosome transport and release from melanocytes (By similarity). Promotes Rabin8/RAB3IP preciliary vesicular trafficking to mother centriole by forming a ciliary targeting complex containing Rab11, ASAP1, Rabin8/RAB3IP, RAB11FIP3 and ARF4, thereby regulating ciliogenesis initiation. On the contrary, upon LPAR1 receptor signaling pathway activation, interaction with phosphorylated WDR44 prevents Rab11-RAB3IP-RAB11FIP3 complex formation and cilia growth. Participates in the export of a subset of neosynthesized proteins through a Rab8-Rab10-Rab11-endososomal dependent export route via interaction with WDR44 (By similarity).</text>
</comment>
<comment type="catalytic activity">
    <reaction evidence="4">
        <text>GTP + H2O = GDP + phosphate + H(+)</text>
        <dbReference type="Rhea" id="RHEA:19669"/>
        <dbReference type="ChEBI" id="CHEBI:15377"/>
        <dbReference type="ChEBI" id="CHEBI:15378"/>
        <dbReference type="ChEBI" id="CHEBI:37565"/>
        <dbReference type="ChEBI" id="CHEBI:43474"/>
        <dbReference type="ChEBI" id="CHEBI:58189"/>
        <dbReference type="EC" id="3.6.5.2"/>
    </reaction>
    <physiologicalReaction direction="left-to-right" evidence="4">
        <dbReference type="Rhea" id="RHEA:19670"/>
    </physiologicalReaction>
</comment>
<comment type="cofactor">
    <cofactor evidence="2">
        <name>Mg(2+)</name>
        <dbReference type="ChEBI" id="CHEBI:18420"/>
    </cofactor>
</comment>
<comment type="activity regulation">
    <text evidence="8">Regulated by guanine nucleotide exchange factors (GEFs) which promote the exchange of bound GDP for free GTP. Regulated by GTPase activating proteins (GAPs) which increase the GTP hydrolysis activity. Inhibited by GDP dissociation inhibitors (GDIs) which prevent Rab-GDP dissociation.</text>
</comment>
<comment type="subunit">
    <text evidence="2 3 5">Interacts (GTP-bound form) with RAB11FIPs (via their C-termini) including RAB11FIP1, RAB11FIP2, RAB11FIP3, RAB11FIP4 and RAB11FIP5 effectors (By similarity). Forms a complex with RAB11FIP3 and dynein intermediate chain DYNC1LI1; the interaction between RAB11A1 and RAB11FIP3 is direct; the complex regulates endocytic trafficking (By similarity). Interacts with EVI5; EVI5 and RAB11FIP3 may be mutually exclusive and compete for binding RAB11A (By similarity). Interacts with SGSM1, SGSM2, SGSM3 and VIPAS39 (By similarity). Interacts with EXOC6 in a GTP-dependent manner. Interacts with RAB11FIP5. Interacts with STXBP6. Interacts (GDP-bound form) with ZFYVE27 (By similarity). Interacts with BIRC6/bruce (By similarity). May interact with TBC1D14 (By similarity). Interacts with UNC119; in a cell cycle-dependent manner (By similarity). GDP-bound and nucleotide-free forms interact with SH3BP5 (By similarity). Interacts (GDP-bound form) with KIF5A in a ZFYVE27-dependent manner (By similarity). Interacts (GDP-bound form) with RELCH (By similarity). Found in a complex composed of RELCH, OSBP1 and RAB11A (By similarity). Interacts with TBC1D12 (By similarity). Interacts with DEF6 (By similarity). Interacts with ATP9A (By similarity). Forms a heterotetramer with RAB11FIP3; the GTP-bound form is preferred for binding. Forms a complex with Rabin8/RAB3IP and RAB11FIP3, probably a heterohexamer with two of each protein subunit, where Rabin8/RAB3IP and RAB11FIP3 simultaneously bind to RAB11A; the complex promotes preciliary trafficking and cilia growth. Forms a complex containing RAB11A, ASAP1, Rabin8/RAB3IP, RAP11FIP3 and ARF4; the complex promotes preciliary trafficking; the complex binds to RHO in photoreceptor cells and promotes RHO ciliary transport. Interacts (GTP-bound form) with WDR44; the interaction prevents RAB11A-RAB3IP-RAB11FIP3 complex formation (By similarity).</text>
</comment>
<comment type="subcellular location">
    <subcellularLocation>
        <location evidence="2">Cell membrane</location>
        <topology evidence="5">Lipid-anchor</topology>
    </subcellularLocation>
    <subcellularLocation>
        <location evidence="2">Endosome membrane</location>
    </subcellularLocation>
    <subcellularLocation>
        <location evidence="2">Recycling endosome membrane</location>
        <topology evidence="5">Lipid-anchor</topology>
    </subcellularLocation>
    <subcellularLocation>
        <location evidence="2">Cleavage furrow</location>
    </subcellularLocation>
    <subcellularLocation>
        <location evidence="2">Cytoplasmic vesicle</location>
        <location evidence="2">Phagosome</location>
    </subcellularLocation>
    <subcellularLocation>
        <location evidence="2">Cytoplasmic vesicle membrane</location>
    </subcellularLocation>
    <subcellularLocation>
        <location evidence="2">Golgi apparatus</location>
    </subcellularLocation>
    <subcellularLocation>
        <location evidence="2">Golgi apparatus</location>
        <location evidence="2">trans-Golgi network</location>
    </subcellularLocation>
    <subcellularLocation>
        <location evidence="2">Cytoplasmic vesicle</location>
    </subcellularLocation>
    <text evidence="2">Localized to WDR44-positive endosomes and tubules. Translocates with RAB11FIP2 from the vesicles of the endocytic recycling compartment (ERC) to the plasma membrane. Localizes to the cleavage furrow. During interphase, localized in vesicles continuously moving from peripheral sorting endosomes towards the pericentrosomal ERC. Colocalizes with PARD3, PRKCI, EXOC5, OCLN, PODXL and RAB8A in apical membrane initiation sites (AMIS) during the generation of apical surface and lumenogenesis. Localized to rhodopsin transport carriers when interacting with RAB11AFIP3 and ASAP1 in photoreceptors. Colocalizes with RAB11AFIP1 on punctate vesicles.</text>
</comment>
<comment type="domain">
    <text evidence="2">Switch 1, switch 2 and the interswitch regions are characteristic of Rab GTPases and mediate the interactions with Rab downstream effectors. The switch regions undergo conformational changes upon nucleotide binding which drives interaction with specific sets of effector proteins, with most effectors only binding to GTP-bound Rab.</text>
</comment>
<comment type="similarity">
    <text evidence="8">Belongs to the small GTPase superfamily. Rab family.</text>
</comment>
<gene>
    <name evidence="3" type="primary">RAB11A</name>
    <name evidence="3" type="synonym">RAB11</name>
</gene>
<keyword id="KW-0007">Acetylation</keyword>
<keyword id="KW-0131">Cell cycle</keyword>
<keyword id="KW-1003">Cell membrane</keyword>
<keyword id="KW-0968">Cytoplasmic vesicle</keyword>
<keyword id="KW-0967">Endosome</keyword>
<keyword id="KW-0333">Golgi apparatus</keyword>
<keyword id="KW-0342">GTP-binding</keyword>
<keyword id="KW-0378">Hydrolase</keyword>
<keyword id="KW-0449">Lipoprotein</keyword>
<keyword id="KW-0460">Magnesium</keyword>
<keyword id="KW-0472">Membrane</keyword>
<keyword id="KW-0479">Metal-binding</keyword>
<keyword id="KW-0488">Methylation</keyword>
<keyword id="KW-0547">Nucleotide-binding</keyword>
<keyword id="KW-0636">Prenylation</keyword>
<keyword id="KW-0653">Protein transport</keyword>
<keyword id="KW-1185">Reference proteome</keyword>
<keyword id="KW-0813">Transport</keyword>
<feature type="initiator methionine" description="Removed" evidence="2">
    <location>
        <position position="1"/>
    </location>
</feature>
<feature type="chain" id="PRO_0000121154" description="Ras-related protein Rab-11A">
    <location>
        <begin position="2"/>
        <end position="213"/>
    </location>
</feature>
<feature type="propeptide" id="PRO_0000370810" description="Removed in mature form" evidence="6">
    <location>
        <begin position="214"/>
        <end position="216"/>
    </location>
</feature>
<feature type="region of interest" description="Disordered" evidence="7">
    <location>
        <begin position="183"/>
        <end position="211"/>
    </location>
</feature>
<feature type="short sequence motif" description="Switch 1" evidence="2">
    <location>
        <begin position="36"/>
        <end position="47"/>
    </location>
</feature>
<feature type="short sequence motif" description="Switch 2" evidence="2">
    <location>
        <begin position="67"/>
        <end position="86"/>
    </location>
</feature>
<feature type="binding site" evidence="2">
    <location>
        <position position="20"/>
    </location>
    <ligand>
        <name>GTP</name>
        <dbReference type="ChEBI" id="CHEBI:37565"/>
    </ligand>
</feature>
<feature type="binding site" evidence="2">
    <location>
        <position position="21"/>
    </location>
    <ligand>
        <name>GTP</name>
        <dbReference type="ChEBI" id="CHEBI:37565"/>
    </ligand>
</feature>
<feature type="binding site" evidence="2">
    <location>
        <position position="22"/>
    </location>
    <ligand>
        <name>GTP</name>
        <dbReference type="ChEBI" id="CHEBI:37565"/>
    </ligand>
</feature>
<feature type="binding site" evidence="2">
    <location>
        <position position="23"/>
    </location>
    <ligand>
        <name>GTP</name>
        <dbReference type="ChEBI" id="CHEBI:37565"/>
    </ligand>
</feature>
<feature type="binding site" evidence="2">
    <location>
        <position position="24"/>
    </location>
    <ligand>
        <name>GTP</name>
        <dbReference type="ChEBI" id="CHEBI:37565"/>
    </ligand>
</feature>
<feature type="binding site" evidence="2">
    <location>
        <position position="25"/>
    </location>
    <ligand>
        <name>GTP</name>
        <dbReference type="ChEBI" id="CHEBI:37565"/>
    </ligand>
</feature>
<feature type="binding site" evidence="2">
    <location>
        <position position="25"/>
    </location>
    <ligand>
        <name>Mg(2+)</name>
        <dbReference type="ChEBI" id="CHEBI:18420"/>
    </ligand>
</feature>
<feature type="binding site" evidence="2">
    <location>
        <position position="26"/>
    </location>
    <ligand>
        <name>GTP</name>
        <dbReference type="ChEBI" id="CHEBI:37565"/>
    </ligand>
</feature>
<feature type="binding site" evidence="2">
    <location>
        <position position="37"/>
    </location>
    <ligand>
        <name>GTP</name>
        <dbReference type="ChEBI" id="CHEBI:37565"/>
    </ligand>
</feature>
<feature type="binding site" evidence="2">
    <location>
        <position position="38"/>
    </location>
    <ligand>
        <name>GTP</name>
        <dbReference type="ChEBI" id="CHEBI:37565"/>
    </ligand>
</feature>
<feature type="binding site" evidence="2">
    <location>
        <position position="40"/>
    </location>
    <ligand>
        <name>GTP</name>
        <dbReference type="ChEBI" id="CHEBI:37565"/>
    </ligand>
</feature>
<feature type="binding site" evidence="2">
    <location>
        <position position="42"/>
    </location>
    <ligand>
        <name>GTP</name>
        <dbReference type="ChEBI" id="CHEBI:37565"/>
    </ligand>
</feature>
<feature type="binding site" evidence="2">
    <location>
        <position position="43"/>
    </location>
    <ligand>
        <name>GTP</name>
        <dbReference type="ChEBI" id="CHEBI:37565"/>
    </ligand>
</feature>
<feature type="binding site" evidence="2">
    <location>
        <position position="43"/>
    </location>
    <ligand>
        <name>Mg(2+)</name>
        <dbReference type="ChEBI" id="CHEBI:18420"/>
    </ligand>
</feature>
<feature type="binding site" evidence="2">
    <location>
        <position position="66"/>
    </location>
    <ligand>
        <name>Mg(2+)</name>
        <dbReference type="ChEBI" id="CHEBI:18420"/>
    </ligand>
</feature>
<feature type="binding site" evidence="2">
    <location>
        <position position="69"/>
    </location>
    <ligand>
        <name>GTP</name>
        <dbReference type="ChEBI" id="CHEBI:37565"/>
    </ligand>
</feature>
<feature type="binding site" evidence="2">
    <location>
        <position position="124"/>
    </location>
    <ligand>
        <name>GTP</name>
        <dbReference type="ChEBI" id="CHEBI:37565"/>
    </ligand>
</feature>
<feature type="binding site" evidence="2">
    <location>
        <position position="125"/>
    </location>
    <ligand>
        <name>GTP</name>
        <dbReference type="ChEBI" id="CHEBI:37565"/>
    </ligand>
</feature>
<feature type="binding site" evidence="2">
    <location>
        <position position="127"/>
    </location>
    <ligand>
        <name>GTP</name>
        <dbReference type="ChEBI" id="CHEBI:37565"/>
    </ligand>
</feature>
<feature type="binding site" evidence="2">
    <location>
        <position position="155"/>
    </location>
    <ligand>
        <name>GTP</name>
        <dbReference type="ChEBI" id="CHEBI:37565"/>
    </ligand>
</feature>
<feature type="binding site" evidence="2">
    <location>
        <position position="156"/>
    </location>
    <ligand>
        <name>GTP</name>
        <dbReference type="ChEBI" id="CHEBI:37565"/>
    </ligand>
</feature>
<feature type="modified residue" description="N-acetylglycine" evidence="2">
    <location>
        <position position="2"/>
    </location>
</feature>
<feature type="modified residue" description="Cysteine methyl ester" evidence="6">
    <location>
        <position position="213"/>
    </location>
</feature>
<feature type="lipid moiety-binding region" description="S-geranylgeranyl cysteine" evidence="2">
    <location>
        <position position="212"/>
    </location>
</feature>
<feature type="lipid moiety-binding region" description="S-geranylgeranyl cysteine" evidence="2">
    <location>
        <position position="213"/>
    </location>
</feature>
<accession>Q5R9M7</accession>
<proteinExistence type="evidence at transcript level"/>
<organism>
    <name type="scientific">Pongo abelii</name>
    <name type="common">Sumatran orangutan</name>
    <name type="synonym">Pongo pygmaeus abelii</name>
    <dbReference type="NCBI Taxonomy" id="9601"/>
    <lineage>
        <taxon>Eukaryota</taxon>
        <taxon>Metazoa</taxon>
        <taxon>Chordata</taxon>
        <taxon>Craniata</taxon>
        <taxon>Vertebrata</taxon>
        <taxon>Euteleostomi</taxon>
        <taxon>Mammalia</taxon>
        <taxon>Eutheria</taxon>
        <taxon>Euarchontoglires</taxon>
        <taxon>Primates</taxon>
        <taxon>Haplorrhini</taxon>
        <taxon>Catarrhini</taxon>
        <taxon>Hominidae</taxon>
        <taxon>Pongo</taxon>
    </lineage>
</organism>
<name>RB11A_PONAB</name>